<accession>D4AWH2</accession>
<name>NSCD_ARTBC</name>
<comment type="function">
    <text evidence="1 2 3">Prenyltransferase; part of the gene cluster that mediates the biosynthesis of neosartoricin B, a prenylated anthracenone that probably exhibits T-cell antiproliferative activity, suggestive of a physiological role as an immunosuppressive agent (PubMed:23758576). The non-reducing polyketide synthase nscA probably synthesizes and cyclizes the decaketide backbone (By similarity). The hydrolase nscB then mediates the product release through hydrolysis followed by spontaneous decarboxylation (By similarity). The prenyltransferase nscD catalyzes the addition of the dimethylallyl group to the aromatic C5 (By similarity). The FAD-dependent monooxygenase nscC is then responsible for the stereospecific hydroxylation at C2 (By similarity). Neosartoricin B can be converted into two additional compounds neosartoricins C and D (By similarity). Neosartoricin C is a spirocyclic compound that is cyclized through the attack of C3 hydroxyl on C14, followed by dehydration (By similarity). On the other hand, neosartoricin D is a further cyclized compound in which attack of C2 on C14 in neosartoricin C results in the formation of the acetal-containing dioxabicyclo-octanone ring (By similarity). Both of these compounds are novel and possibly represent related metabolites of the gene cluster (By similarity).</text>
</comment>
<comment type="pathway">
    <text evidence="6">Secondary metabolite biosynthesis.</text>
</comment>
<comment type="similarity">
    <text evidence="5">Belongs to the tryptophan dimethylallyltransferase family.</text>
</comment>
<reference key="1">
    <citation type="journal article" date="2011" name="Genome Biol.">
        <title>Comparative and functional genomics provide insights into the pathogenicity of dermatophytic fungi.</title>
        <authorList>
            <person name="Burmester A."/>
            <person name="Shelest E."/>
            <person name="Gloeckner G."/>
            <person name="Heddergott C."/>
            <person name="Schindler S."/>
            <person name="Staib P."/>
            <person name="Heidel A."/>
            <person name="Felder M."/>
            <person name="Petzold A."/>
            <person name="Szafranski K."/>
            <person name="Feuermann M."/>
            <person name="Pedruzzi I."/>
            <person name="Priebe S."/>
            <person name="Groth M."/>
            <person name="Winkler R."/>
            <person name="Li W."/>
            <person name="Kniemeyer O."/>
            <person name="Schroeckh V."/>
            <person name="Hertweck C."/>
            <person name="Hube B."/>
            <person name="White T.C."/>
            <person name="Platzer M."/>
            <person name="Guthke R."/>
            <person name="Heitman J."/>
            <person name="Woestemeyer J."/>
            <person name="Zipfel P.F."/>
            <person name="Monod M."/>
            <person name="Brakhage A.A."/>
        </authorList>
    </citation>
    <scope>NUCLEOTIDE SEQUENCE [LARGE SCALE GENOMIC DNA]</scope>
    <source>
        <strain>ATCC MYA-4681 / CBS 112371</strain>
    </source>
</reference>
<reference key="2">
    <citation type="journal article" date="2013" name="ACS Synth. Biol.">
        <title>Discovery of cryptic polyketide metabolites from dermatophytes using heterologous expression in Aspergillus nidulans.</title>
        <authorList>
            <person name="Yin W.B."/>
            <person name="Chooi Y.H."/>
            <person name="Smith A.R."/>
            <person name="Cacho R.A."/>
            <person name="Hu Y."/>
            <person name="White T.C."/>
            <person name="Tang Y."/>
        </authorList>
    </citation>
    <scope>FUNCTION</scope>
</reference>
<evidence type="ECO:0000250" key="1">
    <source>
        <dbReference type="UniProtKB" id="A1D8I8"/>
    </source>
</evidence>
<evidence type="ECO:0000250" key="2">
    <source>
        <dbReference type="UniProtKB" id="F2S700"/>
    </source>
</evidence>
<evidence type="ECO:0000269" key="3">
    <source>
    </source>
</evidence>
<evidence type="ECO:0000303" key="4">
    <source>
    </source>
</evidence>
<evidence type="ECO:0000305" key="5"/>
<evidence type="ECO:0000305" key="6">
    <source>
    </source>
</evidence>
<sequence>MTSVPIFESVSRFLPPANEDEKFWWKVTGRHMARMMHEAGYPEDRQVECLLFHRFKVVPCLGPRPHSDTPWYKSRVGGGAADGCPINYSWRFGTADRRPHIRNFIEPLGALTNTSADPLNEVATKALLHDYSMTLPNVDLEAFWTFAPHYRPRIIEKADMEKLAGASLLVGAEMSPDSHTIDIKAYMYPRVPSQTSQLLTTILPQAMRDAYGEDVCLDSLNFVHDFMTKDPQGCQLVLTGTTGIDCCKLQDTRVKIYVITRNTSFDHIAAIVTLGGRRPISEELLGQLKALWYELKGAPAELPSSEQLPVQTKPDGSKNPIVVPFYFDIQPRLALPDVKAYIDVSTSPVSDLAAANAVVCHLEQHGSGQNPRAYLNVLKDITPVEELETQKGALAFYSVAVKKNELDITSYFNPQVYKRYFAHEVQLNGQRRSVFE</sequence>
<dbReference type="EC" id="2.5.1.-" evidence="6"/>
<dbReference type="EMBL" id="ABSU01000014">
    <property type="protein sequence ID" value="EFE32712.1"/>
    <property type="molecule type" value="Genomic_DNA"/>
</dbReference>
<dbReference type="RefSeq" id="XP_003013352.1">
    <property type="nucleotide sequence ID" value="XM_003013306.1"/>
</dbReference>
<dbReference type="SMR" id="D4AWH2"/>
<dbReference type="STRING" id="663331.D4AWH2"/>
<dbReference type="GeneID" id="9519387"/>
<dbReference type="KEGG" id="abe:ARB_00537"/>
<dbReference type="eggNOG" id="ENOG502S2XP">
    <property type="taxonomic scope" value="Eukaryota"/>
</dbReference>
<dbReference type="HOGENOM" id="CLU_037431_2_2_1"/>
<dbReference type="OMA" id="TGIDCCK"/>
<dbReference type="OrthoDB" id="3354387at2759"/>
<dbReference type="Proteomes" id="UP000008866">
    <property type="component" value="Unassembled WGS sequence"/>
</dbReference>
<dbReference type="GO" id="GO:0004659">
    <property type="term" value="F:prenyltransferase activity"/>
    <property type="evidence" value="ECO:0007669"/>
    <property type="project" value="TreeGrafter"/>
</dbReference>
<dbReference type="GO" id="GO:0009820">
    <property type="term" value="P:alkaloid metabolic process"/>
    <property type="evidence" value="ECO:0007669"/>
    <property type="project" value="InterPro"/>
</dbReference>
<dbReference type="CDD" id="cd13929">
    <property type="entry name" value="PT-DMATS_CymD"/>
    <property type="match status" value="1"/>
</dbReference>
<dbReference type="InterPro" id="IPR033964">
    <property type="entry name" value="Aro_prenylTrfase"/>
</dbReference>
<dbReference type="InterPro" id="IPR017795">
    <property type="entry name" value="Aro_prenylTrfase_DMATS"/>
</dbReference>
<dbReference type="NCBIfam" id="TIGR03429">
    <property type="entry name" value="arom_pren_DMATS"/>
    <property type="match status" value="1"/>
</dbReference>
<dbReference type="PANTHER" id="PTHR40627">
    <property type="entry name" value="INDOLE PRENYLTRANSFERASE TDIB-RELATED"/>
    <property type="match status" value="1"/>
</dbReference>
<dbReference type="PANTHER" id="PTHR40627:SF4">
    <property type="entry name" value="PRENYLTRANSFERASE ASQH1-RELATED"/>
    <property type="match status" value="1"/>
</dbReference>
<dbReference type="Pfam" id="PF11991">
    <property type="entry name" value="Trp_DMAT"/>
    <property type="match status" value="1"/>
</dbReference>
<dbReference type="SFLD" id="SFLDS00036">
    <property type="entry name" value="Aromatic_Prenyltransferase"/>
    <property type="match status" value="1"/>
</dbReference>
<keyword id="KW-1185">Reference proteome</keyword>
<keyword id="KW-0808">Transferase</keyword>
<protein>
    <recommendedName>
        <fullName evidence="4">Prenyltransferase nscD</fullName>
        <ecNumber evidence="6">2.5.1.-</ecNumber>
    </recommendedName>
    <alternativeName>
        <fullName evidence="4">Neosartoricin B biosynthesis protein D</fullName>
    </alternativeName>
</protein>
<gene>
    <name evidence="4" type="primary">nscD</name>
    <name type="ORF">ARB_00537</name>
</gene>
<feature type="chain" id="PRO_0000437919" description="Prenyltransferase nscD">
    <location>
        <begin position="1"/>
        <end position="436"/>
    </location>
</feature>
<proteinExistence type="inferred from homology"/>
<organism>
    <name type="scientific">Arthroderma benhamiae (strain ATCC MYA-4681 / CBS 112371)</name>
    <name type="common">Trichophyton mentagrophytes</name>
    <dbReference type="NCBI Taxonomy" id="663331"/>
    <lineage>
        <taxon>Eukaryota</taxon>
        <taxon>Fungi</taxon>
        <taxon>Dikarya</taxon>
        <taxon>Ascomycota</taxon>
        <taxon>Pezizomycotina</taxon>
        <taxon>Eurotiomycetes</taxon>
        <taxon>Eurotiomycetidae</taxon>
        <taxon>Onygenales</taxon>
        <taxon>Arthrodermataceae</taxon>
        <taxon>Trichophyton</taxon>
    </lineage>
</organism>